<protein>
    <recommendedName>
        <fullName evidence="1">dITP/XTP pyrophosphatase</fullName>
        <ecNumber evidence="1">3.6.1.66</ecNumber>
    </recommendedName>
    <alternativeName>
        <fullName evidence="1">Non-canonical purine NTP pyrophosphatase</fullName>
    </alternativeName>
    <alternativeName>
        <fullName evidence="1">Non-standard purine NTP pyrophosphatase</fullName>
    </alternativeName>
    <alternativeName>
        <fullName evidence="1">Nucleoside-triphosphate diphosphatase</fullName>
    </alternativeName>
    <alternativeName>
        <fullName evidence="1">Nucleoside-triphosphate pyrophosphatase</fullName>
        <shortName evidence="1">NTPase</shortName>
    </alternativeName>
</protein>
<sequence>MSTPHWFDQGSLVLASNNKGKVAEFEKLFEQLKLPVEIIPQGRLNIPDAIEDGLSFIENAIIKARHASKISGKPAMADDSGICVPVLGGAPGIYSARYAGEHGDDAANNAKLLNDLLPFRKNGEVIEGMFVCVLALVTHAEDPLPQIFQGIWHGEILEAPRGENGFGYDPLFWLPELQVSSAELSKEEKNKISHRGQAMQLFRESLV</sequence>
<gene>
    <name type="ordered locus">A1S_0468</name>
</gene>
<keyword id="KW-0378">Hydrolase</keyword>
<keyword id="KW-0460">Magnesium</keyword>
<keyword id="KW-0479">Metal-binding</keyword>
<keyword id="KW-0546">Nucleotide metabolism</keyword>
<keyword id="KW-0547">Nucleotide-binding</keyword>
<evidence type="ECO:0000255" key="1">
    <source>
        <dbReference type="HAMAP-Rule" id="MF_01405"/>
    </source>
</evidence>
<organism>
    <name type="scientific">Acinetobacter baumannii (strain ATCC 17978 / DSM 105126 / CIP 53.77 / LMG 1025 / NCDC KC755 / 5377)</name>
    <dbReference type="NCBI Taxonomy" id="400667"/>
    <lineage>
        <taxon>Bacteria</taxon>
        <taxon>Pseudomonadati</taxon>
        <taxon>Pseudomonadota</taxon>
        <taxon>Gammaproteobacteria</taxon>
        <taxon>Moraxellales</taxon>
        <taxon>Moraxellaceae</taxon>
        <taxon>Acinetobacter</taxon>
        <taxon>Acinetobacter calcoaceticus/baumannii complex</taxon>
    </lineage>
</organism>
<name>IXTPA_ACIBT</name>
<feature type="chain" id="PRO_1000145479" description="dITP/XTP pyrophosphatase">
    <location>
        <begin position="1"/>
        <end position="207"/>
    </location>
</feature>
<feature type="active site" description="Proton acceptor" evidence="1">
    <location>
        <position position="79"/>
    </location>
</feature>
<feature type="binding site" evidence="1">
    <location>
        <begin position="16"/>
        <end position="21"/>
    </location>
    <ligand>
        <name>substrate</name>
    </ligand>
</feature>
<feature type="binding site" evidence="1">
    <location>
        <position position="79"/>
    </location>
    <ligand>
        <name>Mg(2+)</name>
        <dbReference type="ChEBI" id="CHEBI:18420"/>
    </ligand>
</feature>
<feature type="binding site" evidence="1">
    <location>
        <position position="80"/>
    </location>
    <ligand>
        <name>substrate</name>
    </ligand>
</feature>
<feature type="binding site" evidence="1">
    <location>
        <begin position="166"/>
        <end position="169"/>
    </location>
    <ligand>
        <name>substrate</name>
    </ligand>
</feature>
<feature type="binding site" evidence="1">
    <location>
        <position position="189"/>
    </location>
    <ligand>
        <name>substrate</name>
    </ligand>
</feature>
<feature type="binding site" evidence="1">
    <location>
        <begin position="194"/>
        <end position="195"/>
    </location>
    <ligand>
        <name>substrate</name>
    </ligand>
</feature>
<dbReference type="EC" id="3.6.1.66" evidence="1"/>
<dbReference type="EMBL" id="CP000521">
    <property type="protein sequence ID" value="ABO10923.2"/>
    <property type="molecule type" value="Genomic_DNA"/>
</dbReference>
<dbReference type="RefSeq" id="WP_000106721.1">
    <property type="nucleotide sequence ID" value="NZ_CACVBA010000001.1"/>
</dbReference>
<dbReference type="SMR" id="A3M1X9"/>
<dbReference type="KEGG" id="acb:A1S_0468"/>
<dbReference type="HOGENOM" id="CLU_082080_0_3_6"/>
<dbReference type="GO" id="GO:0005829">
    <property type="term" value="C:cytosol"/>
    <property type="evidence" value="ECO:0007669"/>
    <property type="project" value="TreeGrafter"/>
</dbReference>
<dbReference type="GO" id="GO:0035870">
    <property type="term" value="F:dITP diphosphatase activity"/>
    <property type="evidence" value="ECO:0007669"/>
    <property type="project" value="RHEA"/>
</dbReference>
<dbReference type="GO" id="GO:0036220">
    <property type="term" value="F:ITP diphosphatase activity"/>
    <property type="evidence" value="ECO:0007669"/>
    <property type="project" value="UniProtKB-EC"/>
</dbReference>
<dbReference type="GO" id="GO:0046872">
    <property type="term" value="F:metal ion binding"/>
    <property type="evidence" value="ECO:0007669"/>
    <property type="project" value="UniProtKB-KW"/>
</dbReference>
<dbReference type="GO" id="GO:0000166">
    <property type="term" value="F:nucleotide binding"/>
    <property type="evidence" value="ECO:0007669"/>
    <property type="project" value="UniProtKB-KW"/>
</dbReference>
<dbReference type="GO" id="GO:0017111">
    <property type="term" value="F:ribonucleoside triphosphate phosphatase activity"/>
    <property type="evidence" value="ECO:0007669"/>
    <property type="project" value="InterPro"/>
</dbReference>
<dbReference type="GO" id="GO:0036222">
    <property type="term" value="F:XTP diphosphatase activity"/>
    <property type="evidence" value="ECO:0007669"/>
    <property type="project" value="RHEA"/>
</dbReference>
<dbReference type="GO" id="GO:0009117">
    <property type="term" value="P:nucleotide metabolic process"/>
    <property type="evidence" value="ECO:0007669"/>
    <property type="project" value="UniProtKB-KW"/>
</dbReference>
<dbReference type="GO" id="GO:0009146">
    <property type="term" value="P:purine nucleoside triphosphate catabolic process"/>
    <property type="evidence" value="ECO:0007669"/>
    <property type="project" value="UniProtKB-UniRule"/>
</dbReference>
<dbReference type="CDD" id="cd00515">
    <property type="entry name" value="HAM1"/>
    <property type="match status" value="1"/>
</dbReference>
<dbReference type="FunFam" id="3.90.950.10:FF:000001">
    <property type="entry name" value="dITP/XTP pyrophosphatase"/>
    <property type="match status" value="1"/>
</dbReference>
<dbReference type="Gene3D" id="3.90.950.10">
    <property type="match status" value="1"/>
</dbReference>
<dbReference type="HAMAP" id="MF_01405">
    <property type="entry name" value="Non_canon_purine_NTPase"/>
    <property type="match status" value="1"/>
</dbReference>
<dbReference type="InterPro" id="IPR020922">
    <property type="entry name" value="dITP/XTP_pyrophosphatase"/>
</dbReference>
<dbReference type="InterPro" id="IPR029001">
    <property type="entry name" value="ITPase-like_fam"/>
</dbReference>
<dbReference type="InterPro" id="IPR002637">
    <property type="entry name" value="RdgB/HAM1"/>
</dbReference>
<dbReference type="NCBIfam" id="TIGR00042">
    <property type="entry name" value="RdgB/HAM1 family non-canonical purine NTP pyrophosphatase"/>
    <property type="match status" value="1"/>
</dbReference>
<dbReference type="PANTHER" id="PTHR11067:SF9">
    <property type="entry name" value="INOSINE TRIPHOSPHATE PYROPHOSPHATASE"/>
    <property type="match status" value="1"/>
</dbReference>
<dbReference type="PANTHER" id="PTHR11067">
    <property type="entry name" value="INOSINE TRIPHOSPHATE PYROPHOSPHATASE/HAM1 PROTEIN"/>
    <property type="match status" value="1"/>
</dbReference>
<dbReference type="Pfam" id="PF01725">
    <property type="entry name" value="Ham1p_like"/>
    <property type="match status" value="1"/>
</dbReference>
<dbReference type="SUPFAM" id="SSF52972">
    <property type="entry name" value="ITPase-like"/>
    <property type="match status" value="1"/>
</dbReference>
<proteinExistence type="inferred from homology"/>
<accession>A3M1X9</accession>
<reference key="1">
    <citation type="journal article" date="2007" name="Genes Dev.">
        <title>New insights into Acinetobacter baumannii pathogenesis revealed by high-density pyrosequencing and transposon mutagenesis.</title>
        <authorList>
            <person name="Smith M.G."/>
            <person name="Gianoulis T.A."/>
            <person name="Pukatzki S."/>
            <person name="Mekalanos J.J."/>
            <person name="Ornston L.N."/>
            <person name="Gerstein M."/>
            <person name="Snyder M."/>
        </authorList>
    </citation>
    <scope>NUCLEOTIDE SEQUENCE [LARGE SCALE GENOMIC DNA]</scope>
    <source>
        <strain>ATCC 17978 / DSM 105126 / CIP 53.77 / LMG 1025 / NCDC KC755 / 5377</strain>
    </source>
</reference>
<comment type="function">
    <text evidence="1">Pyrophosphatase that catalyzes the hydrolysis of nucleoside triphosphates to their monophosphate derivatives, with a high preference for the non-canonical purine nucleotides XTP (xanthosine triphosphate), dITP (deoxyinosine triphosphate) and ITP. Seems to function as a house-cleaning enzyme that removes non-canonical purine nucleotides from the nucleotide pool, thus preventing their incorporation into DNA/RNA and avoiding chromosomal lesions.</text>
</comment>
<comment type="catalytic activity">
    <reaction evidence="1">
        <text>XTP + H2O = XMP + diphosphate + H(+)</text>
        <dbReference type="Rhea" id="RHEA:28610"/>
        <dbReference type="ChEBI" id="CHEBI:15377"/>
        <dbReference type="ChEBI" id="CHEBI:15378"/>
        <dbReference type="ChEBI" id="CHEBI:33019"/>
        <dbReference type="ChEBI" id="CHEBI:57464"/>
        <dbReference type="ChEBI" id="CHEBI:61314"/>
        <dbReference type="EC" id="3.6.1.66"/>
    </reaction>
</comment>
<comment type="catalytic activity">
    <reaction evidence="1">
        <text>dITP + H2O = dIMP + diphosphate + H(+)</text>
        <dbReference type="Rhea" id="RHEA:28342"/>
        <dbReference type="ChEBI" id="CHEBI:15377"/>
        <dbReference type="ChEBI" id="CHEBI:15378"/>
        <dbReference type="ChEBI" id="CHEBI:33019"/>
        <dbReference type="ChEBI" id="CHEBI:61194"/>
        <dbReference type="ChEBI" id="CHEBI:61382"/>
        <dbReference type="EC" id="3.6.1.66"/>
    </reaction>
</comment>
<comment type="catalytic activity">
    <reaction evidence="1">
        <text>ITP + H2O = IMP + diphosphate + H(+)</text>
        <dbReference type="Rhea" id="RHEA:29399"/>
        <dbReference type="ChEBI" id="CHEBI:15377"/>
        <dbReference type="ChEBI" id="CHEBI:15378"/>
        <dbReference type="ChEBI" id="CHEBI:33019"/>
        <dbReference type="ChEBI" id="CHEBI:58053"/>
        <dbReference type="ChEBI" id="CHEBI:61402"/>
        <dbReference type="EC" id="3.6.1.66"/>
    </reaction>
</comment>
<comment type="cofactor">
    <cofactor evidence="1">
        <name>Mg(2+)</name>
        <dbReference type="ChEBI" id="CHEBI:18420"/>
    </cofactor>
    <text evidence="1">Binds 1 Mg(2+) ion per subunit.</text>
</comment>
<comment type="subunit">
    <text evidence="1">Homodimer.</text>
</comment>
<comment type="similarity">
    <text evidence="1">Belongs to the HAM1 NTPase family.</text>
</comment>